<protein>
    <recommendedName>
        <fullName evidence="1">Large ribosomal subunit protein uL16</fullName>
    </recommendedName>
    <alternativeName>
        <fullName evidence="3">50S ribosomal protein L16</fullName>
    </alternativeName>
</protein>
<accession>A1A076</accession>
<proteinExistence type="inferred from homology"/>
<reference key="1">
    <citation type="submission" date="2006-12" db="EMBL/GenBank/DDBJ databases">
        <title>Bifidobacterium adolescentis complete genome sequence.</title>
        <authorList>
            <person name="Suzuki T."/>
            <person name="Tsuda Y."/>
            <person name="Kanou N."/>
            <person name="Inoue T."/>
            <person name="Kumazaki K."/>
            <person name="Nagano S."/>
            <person name="Hirai S."/>
            <person name="Tanaka K."/>
            <person name="Watanabe K."/>
        </authorList>
    </citation>
    <scope>NUCLEOTIDE SEQUENCE [LARGE SCALE GENOMIC DNA]</scope>
    <source>
        <strain>ATCC 15703 / DSM 20083 / NCTC 11814 / E194a</strain>
    </source>
</reference>
<gene>
    <name evidence="1" type="primary">rplP</name>
    <name type="ordered locus">BAD_0328</name>
</gene>
<organism>
    <name type="scientific">Bifidobacterium adolescentis (strain ATCC 15703 / DSM 20083 / NCTC 11814 / E194a)</name>
    <dbReference type="NCBI Taxonomy" id="367928"/>
    <lineage>
        <taxon>Bacteria</taxon>
        <taxon>Bacillati</taxon>
        <taxon>Actinomycetota</taxon>
        <taxon>Actinomycetes</taxon>
        <taxon>Bifidobacteriales</taxon>
        <taxon>Bifidobacteriaceae</taxon>
        <taxon>Bifidobacterium</taxon>
    </lineage>
</organism>
<evidence type="ECO:0000255" key="1">
    <source>
        <dbReference type="HAMAP-Rule" id="MF_01342"/>
    </source>
</evidence>
<evidence type="ECO:0000256" key="2">
    <source>
        <dbReference type="SAM" id="MobiDB-lite"/>
    </source>
</evidence>
<evidence type="ECO:0000305" key="3"/>
<name>RL16_BIFAA</name>
<sequence>MLIPKRTKYRKQHRPVRRGMSKGGNEIAFGDFGIQALAPAYVTNRQIEAARIAMTRYIKRGGRVWITIFPDRPLTKKPLGTRMGSGKGTPEFWIANVHPGRVMFEIGGVSEDVAREALRRAIDKLPMKCRVIAREGGDI</sequence>
<comment type="function">
    <text evidence="1">Binds 23S rRNA and is also seen to make contacts with the A and possibly P site tRNAs.</text>
</comment>
<comment type="subunit">
    <text evidence="1">Part of the 50S ribosomal subunit.</text>
</comment>
<comment type="similarity">
    <text evidence="1">Belongs to the universal ribosomal protein uL16 family.</text>
</comment>
<feature type="chain" id="PRO_1000054581" description="Large ribosomal subunit protein uL16">
    <location>
        <begin position="1"/>
        <end position="139"/>
    </location>
</feature>
<feature type="region of interest" description="Disordered" evidence="2">
    <location>
        <begin position="1"/>
        <end position="21"/>
    </location>
</feature>
<feature type="compositionally biased region" description="Basic residues" evidence="2">
    <location>
        <begin position="1"/>
        <end position="20"/>
    </location>
</feature>
<dbReference type="EMBL" id="AP009256">
    <property type="protein sequence ID" value="BAF39109.1"/>
    <property type="molecule type" value="Genomic_DNA"/>
</dbReference>
<dbReference type="RefSeq" id="WP_003835996.1">
    <property type="nucleotide sequence ID" value="NZ_CAXVNC010000001.1"/>
</dbReference>
<dbReference type="SMR" id="A1A076"/>
<dbReference type="STRING" id="367928.BAD_0328"/>
<dbReference type="PaxDb" id="1680-BADO_0335"/>
<dbReference type="GeneID" id="45598861"/>
<dbReference type="KEGG" id="bad:BAD_0328"/>
<dbReference type="HOGENOM" id="CLU_078858_2_1_11"/>
<dbReference type="Proteomes" id="UP000008702">
    <property type="component" value="Chromosome"/>
</dbReference>
<dbReference type="GO" id="GO:0022625">
    <property type="term" value="C:cytosolic large ribosomal subunit"/>
    <property type="evidence" value="ECO:0007669"/>
    <property type="project" value="TreeGrafter"/>
</dbReference>
<dbReference type="GO" id="GO:0019843">
    <property type="term" value="F:rRNA binding"/>
    <property type="evidence" value="ECO:0007669"/>
    <property type="project" value="UniProtKB-UniRule"/>
</dbReference>
<dbReference type="GO" id="GO:0003735">
    <property type="term" value="F:structural constituent of ribosome"/>
    <property type="evidence" value="ECO:0007669"/>
    <property type="project" value="InterPro"/>
</dbReference>
<dbReference type="GO" id="GO:0000049">
    <property type="term" value="F:tRNA binding"/>
    <property type="evidence" value="ECO:0007669"/>
    <property type="project" value="UniProtKB-KW"/>
</dbReference>
<dbReference type="GO" id="GO:0006412">
    <property type="term" value="P:translation"/>
    <property type="evidence" value="ECO:0007669"/>
    <property type="project" value="UniProtKB-UniRule"/>
</dbReference>
<dbReference type="CDD" id="cd01433">
    <property type="entry name" value="Ribosomal_L16_L10e"/>
    <property type="match status" value="1"/>
</dbReference>
<dbReference type="FunFam" id="3.90.1170.10:FF:000001">
    <property type="entry name" value="50S ribosomal protein L16"/>
    <property type="match status" value="1"/>
</dbReference>
<dbReference type="Gene3D" id="3.90.1170.10">
    <property type="entry name" value="Ribosomal protein L10e/L16"/>
    <property type="match status" value="1"/>
</dbReference>
<dbReference type="HAMAP" id="MF_01342">
    <property type="entry name" value="Ribosomal_uL16"/>
    <property type="match status" value="1"/>
</dbReference>
<dbReference type="InterPro" id="IPR047873">
    <property type="entry name" value="Ribosomal_uL16"/>
</dbReference>
<dbReference type="InterPro" id="IPR000114">
    <property type="entry name" value="Ribosomal_uL16_bact-type"/>
</dbReference>
<dbReference type="InterPro" id="IPR020798">
    <property type="entry name" value="Ribosomal_uL16_CS"/>
</dbReference>
<dbReference type="InterPro" id="IPR016180">
    <property type="entry name" value="Ribosomal_uL16_dom"/>
</dbReference>
<dbReference type="InterPro" id="IPR036920">
    <property type="entry name" value="Ribosomal_uL16_sf"/>
</dbReference>
<dbReference type="NCBIfam" id="TIGR01164">
    <property type="entry name" value="rplP_bact"/>
    <property type="match status" value="1"/>
</dbReference>
<dbReference type="PANTHER" id="PTHR12220">
    <property type="entry name" value="50S/60S RIBOSOMAL PROTEIN L16"/>
    <property type="match status" value="1"/>
</dbReference>
<dbReference type="PANTHER" id="PTHR12220:SF13">
    <property type="entry name" value="LARGE RIBOSOMAL SUBUNIT PROTEIN UL16M"/>
    <property type="match status" value="1"/>
</dbReference>
<dbReference type="Pfam" id="PF00252">
    <property type="entry name" value="Ribosomal_L16"/>
    <property type="match status" value="1"/>
</dbReference>
<dbReference type="PRINTS" id="PR00060">
    <property type="entry name" value="RIBOSOMALL16"/>
</dbReference>
<dbReference type="SUPFAM" id="SSF54686">
    <property type="entry name" value="Ribosomal protein L16p/L10e"/>
    <property type="match status" value="1"/>
</dbReference>
<dbReference type="PROSITE" id="PS00701">
    <property type="entry name" value="RIBOSOMAL_L16_2"/>
    <property type="match status" value="1"/>
</dbReference>
<keyword id="KW-1185">Reference proteome</keyword>
<keyword id="KW-0687">Ribonucleoprotein</keyword>
<keyword id="KW-0689">Ribosomal protein</keyword>
<keyword id="KW-0694">RNA-binding</keyword>
<keyword id="KW-0699">rRNA-binding</keyword>
<keyword id="KW-0820">tRNA-binding</keyword>